<protein>
    <recommendedName>
        <fullName evidence="1">Orotidine 5'-phosphate decarboxylase</fullName>
        <ecNumber evidence="1">4.1.1.23</ecNumber>
    </recommendedName>
    <alternativeName>
        <fullName evidence="1">OMP decarboxylase</fullName>
        <shortName evidence="1">OMPDCase</shortName>
        <shortName evidence="1">OMPdecase</shortName>
    </alternativeName>
</protein>
<feature type="chain" id="PRO_1000065924" description="Orotidine 5'-phosphate decarboxylase">
    <location>
        <begin position="1"/>
        <end position="228"/>
    </location>
</feature>
<feature type="active site" description="Proton donor" evidence="1">
    <location>
        <position position="62"/>
    </location>
</feature>
<feature type="binding site" evidence="1">
    <location>
        <position position="10"/>
    </location>
    <ligand>
        <name>substrate</name>
    </ligand>
</feature>
<feature type="binding site" evidence="1">
    <location>
        <position position="33"/>
    </location>
    <ligand>
        <name>substrate</name>
    </ligand>
</feature>
<feature type="binding site" evidence="1">
    <location>
        <begin position="60"/>
        <end position="69"/>
    </location>
    <ligand>
        <name>substrate</name>
    </ligand>
</feature>
<feature type="binding site" evidence="1">
    <location>
        <position position="116"/>
    </location>
    <ligand>
        <name>substrate</name>
    </ligand>
</feature>
<feature type="binding site" evidence="1">
    <location>
        <position position="178"/>
    </location>
    <ligand>
        <name>substrate</name>
    </ligand>
</feature>
<feature type="binding site" evidence="1">
    <location>
        <position position="187"/>
    </location>
    <ligand>
        <name>substrate</name>
    </ligand>
</feature>
<feature type="binding site" evidence="1">
    <location>
        <position position="207"/>
    </location>
    <ligand>
        <name>substrate</name>
    </ligand>
</feature>
<feature type="binding site" evidence="1">
    <location>
        <position position="208"/>
    </location>
    <ligand>
        <name>substrate</name>
    </ligand>
</feature>
<comment type="function">
    <text evidence="1">Catalyzes the decarboxylation of orotidine 5'-monophosphate (OMP) to uridine 5'-monophosphate (UMP).</text>
</comment>
<comment type="catalytic activity">
    <reaction evidence="1">
        <text>orotidine 5'-phosphate + H(+) = UMP + CO2</text>
        <dbReference type="Rhea" id="RHEA:11596"/>
        <dbReference type="ChEBI" id="CHEBI:15378"/>
        <dbReference type="ChEBI" id="CHEBI:16526"/>
        <dbReference type="ChEBI" id="CHEBI:57538"/>
        <dbReference type="ChEBI" id="CHEBI:57865"/>
        <dbReference type="EC" id="4.1.1.23"/>
    </reaction>
</comment>
<comment type="pathway">
    <text evidence="1">Pyrimidine metabolism; UMP biosynthesis via de novo pathway; UMP from orotate: step 2/2.</text>
</comment>
<comment type="subunit">
    <text evidence="1">Homodimer.</text>
</comment>
<comment type="similarity">
    <text evidence="1">Belongs to the OMP decarboxylase family. Type 1 subfamily.</text>
</comment>
<name>PYRF_OENOB</name>
<organism>
    <name type="scientific">Oenococcus oeni (strain ATCC BAA-331 / PSU-1)</name>
    <dbReference type="NCBI Taxonomy" id="203123"/>
    <lineage>
        <taxon>Bacteria</taxon>
        <taxon>Bacillati</taxon>
        <taxon>Bacillota</taxon>
        <taxon>Bacilli</taxon>
        <taxon>Lactobacillales</taxon>
        <taxon>Lactobacillaceae</taxon>
        <taxon>Oenococcus</taxon>
    </lineage>
</organism>
<dbReference type="EC" id="4.1.1.23" evidence="1"/>
<dbReference type="EMBL" id="CP000411">
    <property type="protein sequence ID" value="ABJ56244.1"/>
    <property type="molecule type" value="Genomic_DNA"/>
</dbReference>
<dbReference type="RefSeq" id="WP_002820197.1">
    <property type="nucleotide sequence ID" value="NC_008528.1"/>
</dbReference>
<dbReference type="SMR" id="Q04H28"/>
<dbReference type="STRING" id="203123.OEOE_0262"/>
<dbReference type="GeneID" id="75065091"/>
<dbReference type="KEGG" id="ooe:OEOE_0262"/>
<dbReference type="eggNOG" id="COG0284">
    <property type="taxonomic scope" value="Bacteria"/>
</dbReference>
<dbReference type="HOGENOM" id="CLU_067069_1_1_9"/>
<dbReference type="UniPathway" id="UPA00070">
    <property type="reaction ID" value="UER00120"/>
</dbReference>
<dbReference type="Proteomes" id="UP000000774">
    <property type="component" value="Chromosome"/>
</dbReference>
<dbReference type="GO" id="GO:0005829">
    <property type="term" value="C:cytosol"/>
    <property type="evidence" value="ECO:0007669"/>
    <property type="project" value="TreeGrafter"/>
</dbReference>
<dbReference type="GO" id="GO:0004590">
    <property type="term" value="F:orotidine-5'-phosphate decarboxylase activity"/>
    <property type="evidence" value="ECO:0007669"/>
    <property type="project" value="UniProtKB-UniRule"/>
</dbReference>
<dbReference type="GO" id="GO:0006207">
    <property type="term" value="P:'de novo' pyrimidine nucleobase biosynthetic process"/>
    <property type="evidence" value="ECO:0007669"/>
    <property type="project" value="InterPro"/>
</dbReference>
<dbReference type="GO" id="GO:0044205">
    <property type="term" value="P:'de novo' UMP biosynthetic process"/>
    <property type="evidence" value="ECO:0007669"/>
    <property type="project" value="UniProtKB-UniRule"/>
</dbReference>
<dbReference type="CDD" id="cd04725">
    <property type="entry name" value="OMP_decarboxylase_like"/>
    <property type="match status" value="1"/>
</dbReference>
<dbReference type="FunFam" id="3.20.20.70:FF:000015">
    <property type="entry name" value="Orotidine 5'-phosphate decarboxylase"/>
    <property type="match status" value="1"/>
</dbReference>
<dbReference type="Gene3D" id="3.20.20.70">
    <property type="entry name" value="Aldolase class I"/>
    <property type="match status" value="1"/>
</dbReference>
<dbReference type="HAMAP" id="MF_01200_B">
    <property type="entry name" value="OMPdecase_type1_B"/>
    <property type="match status" value="1"/>
</dbReference>
<dbReference type="InterPro" id="IPR013785">
    <property type="entry name" value="Aldolase_TIM"/>
</dbReference>
<dbReference type="InterPro" id="IPR014732">
    <property type="entry name" value="OMPdecase"/>
</dbReference>
<dbReference type="InterPro" id="IPR018089">
    <property type="entry name" value="OMPdecase_AS"/>
</dbReference>
<dbReference type="InterPro" id="IPR047596">
    <property type="entry name" value="OMPdecase_bac"/>
</dbReference>
<dbReference type="InterPro" id="IPR001754">
    <property type="entry name" value="OMPdeCOase_dom"/>
</dbReference>
<dbReference type="InterPro" id="IPR011060">
    <property type="entry name" value="RibuloseP-bd_barrel"/>
</dbReference>
<dbReference type="NCBIfam" id="NF001273">
    <property type="entry name" value="PRK00230.1"/>
    <property type="match status" value="1"/>
</dbReference>
<dbReference type="NCBIfam" id="TIGR01740">
    <property type="entry name" value="pyrF"/>
    <property type="match status" value="1"/>
</dbReference>
<dbReference type="PANTHER" id="PTHR32119">
    <property type="entry name" value="OROTIDINE 5'-PHOSPHATE DECARBOXYLASE"/>
    <property type="match status" value="1"/>
</dbReference>
<dbReference type="PANTHER" id="PTHR32119:SF2">
    <property type="entry name" value="OROTIDINE 5'-PHOSPHATE DECARBOXYLASE"/>
    <property type="match status" value="1"/>
</dbReference>
<dbReference type="Pfam" id="PF00215">
    <property type="entry name" value="OMPdecase"/>
    <property type="match status" value="1"/>
</dbReference>
<dbReference type="SMART" id="SM00934">
    <property type="entry name" value="OMPdecase"/>
    <property type="match status" value="1"/>
</dbReference>
<dbReference type="SUPFAM" id="SSF51366">
    <property type="entry name" value="Ribulose-phoshate binding barrel"/>
    <property type="match status" value="1"/>
</dbReference>
<dbReference type="PROSITE" id="PS00156">
    <property type="entry name" value="OMPDECASE"/>
    <property type="match status" value="1"/>
</dbReference>
<keyword id="KW-0210">Decarboxylase</keyword>
<keyword id="KW-0456">Lyase</keyword>
<keyword id="KW-0665">Pyrimidine biosynthesis</keyword>
<keyword id="KW-1185">Reference proteome</keyword>
<accession>Q04H28</accession>
<reference key="1">
    <citation type="journal article" date="2006" name="Proc. Natl. Acad. Sci. U.S.A.">
        <title>Comparative genomics of the lactic acid bacteria.</title>
        <authorList>
            <person name="Makarova K.S."/>
            <person name="Slesarev A."/>
            <person name="Wolf Y.I."/>
            <person name="Sorokin A."/>
            <person name="Mirkin B."/>
            <person name="Koonin E.V."/>
            <person name="Pavlov A."/>
            <person name="Pavlova N."/>
            <person name="Karamychev V."/>
            <person name="Polouchine N."/>
            <person name="Shakhova V."/>
            <person name="Grigoriev I."/>
            <person name="Lou Y."/>
            <person name="Rohksar D."/>
            <person name="Lucas S."/>
            <person name="Huang K."/>
            <person name="Goodstein D.M."/>
            <person name="Hawkins T."/>
            <person name="Plengvidhya V."/>
            <person name="Welker D."/>
            <person name="Hughes J."/>
            <person name="Goh Y."/>
            <person name="Benson A."/>
            <person name="Baldwin K."/>
            <person name="Lee J.-H."/>
            <person name="Diaz-Muniz I."/>
            <person name="Dosti B."/>
            <person name="Smeianov V."/>
            <person name="Wechter W."/>
            <person name="Barabote R."/>
            <person name="Lorca G."/>
            <person name="Altermann E."/>
            <person name="Barrangou R."/>
            <person name="Ganesan B."/>
            <person name="Xie Y."/>
            <person name="Rawsthorne H."/>
            <person name="Tamir D."/>
            <person name="Parker C."/>
            <person name="Breidt F."/>
            <person name="Broadbent J.R."/>
            <person name="Hutkins R."/>
            <person name="O'Sullivan D."/>
            <person name="Steele J."/>
            <person name="Unlu G."/>
            <person name="Saier M.H. Jr."/>
            <person name="Klaenhammer T."/>
            <person name="Richardson P."/>
            <person name="Kozyavkin S."/>
            <person name="Weimer B.C."/>
            <person name="Mills D.A."/>
        </authorList>
    </citation>
    <scope>NUCLEOTIDE SEQUENCE [LARGE SCALE GENOMIC DNA]</scope>
    <source>
        <strain>ATCC BAA-331 / PSU-1</strain>
    </source>
</reference>
<gene>
    <name evidence="1" type="primary">pyrF</name>
    <name type="ordered locus">OEOE_0262</name>
</gene>
<evidence type="ECO:0000255" key="1">
    <source>
        <dbReference type="HAMAP-Rule" id="MF_01200"/>
    </source>
</evidence>
<sequence length="228" mass="25038">MNKPVFIALDFPNLKTAFDFLNKFPSHEKPAVKVGMELFYAEGPKIIQQLRQKGYKVFLDLKLYDIPHTVAAAVRSLLALDVQYLTIHSLGGLKMMEAAVDAAEGKIKLLAVTQLTSISANEMRGTQLTSATIEQSVKHLTQLALLAGVDGTISSPLEANIIKQITPDDFLKITPGIRLFNDQNGDQIRITTPKKAKEFGASGLVVGRSITQAADPLSVYRKILEEFE</sequence>
<proteinExistence type="inferred from homology"/>